<reference key="1">
    <citation type="journal article" date="2008" name="J. Bacteriol.">
        <title>The complete genome sequence of Actinobacillus pleuropneumoniae L20 (serotype 5b).</title>
        <authorList>
            <person name="Foote S.J."/>
            <person name="Bosse J.T."/>
            <person name="Bouevitch A.B."/>
            <person name="Langford P.R."/>
            <person name="Young N.M."/>
            <person name="Nash J.H.E."/>
        </authorList>
    </citation>
    <scope>NUCLEOTIDE SEQUENCE [LARGE SCALE GENOMIC DNA]</scope>
    <source>
        <strain>L20</strain>
    </source>
</reference>
<proteinExistence type="inferred from homology"/>
<sequence>MPIITLPDGSQRQFDNPVSVMEVAQSIGAGLAKATIAGRVNGERRDACDIISEDSSLEIITAKDEDGLEIIRHSCAHLLGHAIKQLFPNVKMAIGPTIDNGFYYDVDLDRSLTQEDLDAIEKRMLELAKTNYDVVKKRVSWQEARDTFEKRGEPYKMAILDENIERTATPALYHHEEYIDMCRGPHVPNMRFCHHFKLQKVAGAYWRGDSKNKMLQRIYGTAWADKKQLAEYLTRLEEAAKRDHRRIGKALDLYHMQEEAPGLVFWHNDGWTIFRELETFVRTKLKEYDYQEVKGPFMMDRVLWERTGHWQNYADLMFTTQSENREYAIKPMNCPGHVQIFNQGLKSYRDLPIRMAEFGSCHRNEPSGSLHGLMRVRGFTQDDAHIFCTEDQIESEVTSCIRMVYDIYSTFGFSNIQVKLSTRPENRIGDDAMWDRAEDGLAKALTANGLSYEIQEGEGAFYGPKIEFALRDCLDREWQCGTIQLDFALPGRLDASYVAEDNGRRTPVMIHRAILGSIERFIGIITEEYAGFFPTWLAPTQAVVMNITDSQADYVQKVTKALSDAGIRVKSDLRNEKVGFKVREHTLRRVPYMLVCGDKEIEAGKVSVRTRKGADLGTFTIDEFVEILKNQVKARGLKLLGEE</sequence>
<name>SYT_ACTP2</name>
<evidence type="ECO:0000255" key="1">
    <source>
        <dbReference type="HAMAP-Rule" id="MF_00184"/>
    </source>
</evidence>
<evidence type="ECO:0000255" key="2">
    <source>
        <dbReference type="PROSITE-ProRule" id="PRU01228"/>
    </source>
</evidence>
<feature type="chain" id="PRO_1000020332" description="Threonine--tRNA ligase">
    <location>
        <begin position="1"/>
        <end position="643"/>
    </location>
</feature>
<feature type="domain" description="TGS" evidence="2">
    <location>
        <begin position="1"/>
        <end position="61"/>
    </location>
</feature>
<feature type="region of interest" description="Catalytic" evidence="1">
    <location>
        <begin position="243"/>
        <end position="534"/>
    </location>
</feature>
<feature type="binding site" evidence="1">
    <location>
        <position position="334"/>
    </location>
    <ligand>
        <name>Zn(2+)</name>
        <dbReference type="ChEBI" id="CHEBI:29105"/>
    </ligand>
</feature>
<feature type="binding site" evidence="1">
    <location>
        <position position="385"/>
    </location>
    <ligand>
        <name>Zn(2+)</name>
        <dbReference type="ChEBI" id="CHEBI:29105"/>
    </ligand>
</feature>
<feature type="binding site" evidence="1">
    <location>
        <position position="511"/>
    </location>
    <ligand>
        <name>Zn(2+)</name>
        <dbReference type="ChEBI" id="CHEBI:29105"/>
    </ligand>
</feature>
<accession>A3MYU1</accession>
<keyword id="KW-0030">Aminoacyl-tRNA synthetase</keyword>
<keyword id="KW-0067">ATP-binding</keyword>
<keyword id="KW-0963">Cytoplasm</keyword>
<keyword id="KW-0436">Ligase</keyword>
<keyword id="KW-0479">Metal-binding</keyword>
<keyword id="KW-0547">Nucleotide-binding</keyword>
<keyword id="KW-0648">Protein biosynthesis</keyword>
<keyword id="KW-1185">Reference proteome</keyword>
<keyword id="KW-0694">RNA-binding</keyword>
<keyword id="KW-0820">tRNA-binding</keyword>
<keyword id="KW-0862">Zinc</keyword>
<comment type="function">
    <text evidence="1">Catalyzes the attachment of threonine to tRNA(Thr) in a two-step reaction: L-threonine is first activated by ATP to form Thr-AMP and then transferred to the acceptor end of tRNA(Thr). Also edits incorrectly charged L-seryl-tRNA(Thr).</text>
</comment>
<comment type="catalytic activity">
    <reaction evidence="1">
        <text>tRNA(Thr) + L-threonine + ATP = L-threonyl-tRNA(Thr) + AMP + diphosphate + H(+)</text>
        <dbReference type="Rhea" id="RHEA:24624"/>
        <dbReference type="Rhea" id="RHEA-COMP:9670"/>
        <dbReference type="Rhea" id="RHEA-COMP:9704"/>
        <dbReference type="ChEBI" id="CHEBI:15378"/>
        <dbReference type="ChEBI" id="CHEBI:30616"/>
        <dbReference type="ChEBI" id="CHEBI:33019"/>
        <dbReference type="ChEBI" id="CHEBI:57926"/>
        <dbReference type="ChEBI" id="CHEBI:78442"/>
        <dbReference type="ChEBI" id="CHEBI:78534"/>
        <dbReference type="ChEBI" id="CHEBI:456215"/>
        <dbReference type="EC" id="6.1.1.3"/>
    </reaction>
</comment>
<comment type="cofactor">
    <cofactor evidence="1">
        <name>Zn(2+)</name>
        <dbReference type="ChEBI" id="CHEBI:29105"/>
    </cofactor>
    <text evidence="1">Binds 1 zinc ion per subunit.</text>
</comment>
<comment type="subunit">
    <text evidence="1">Homodimer.</text>
</comment>
<comment type="subcellular location">
    <subcellularLocation>
        <location evidence="1">Cytoplasm</location>
    </subcellularLocation>
</comment>
<comment type="similarity">
    <text evidence="1">Belongs to the class-II aminoacyl-tRNA synthetase family.</text>
</comment>
<organism>
    <name type="scientific">Actinobacillus pleuropneumoniae serotype 5b (strain L20)</name>
    <dbReference type="NCBI Taxonomy" id="416269"/>
    <lineage>
        <taxon>Bacteria</taxon>
        <taxon>Pseudomonadati</taxon>
        <taxon>Pseudomonadota</taxon>
        <taxon>Gammaproteobacteria</taxon>
        <taxon>Pasteurellales</taxon>
        <taxon>Pasteurellaceae</taxon>
        <taxon>Actinobacillus</taxon>
    </lineage>
</organism>
<gene>
    <name evidence="1" type="primary">thrS</name>
    <name type="ordered locus">APL_0219</name>
</gene>
<protein>
    <recommendedName>
        <fullName evidence="1">Threonine--tRNA ligase</fullName>
        <ecNumber evidence="1">6.1.1.3</ecNumber>
    </recommendedName>
    <alternativeName>
        <fullName evidence="1">Threonyl-tRNA synthetase</fullName>
        <shortName evidence="1">ThrRS</shortName>
    </alternativeName>
</protein>
<dbReference type="EC" id="6.1.1.3" evidence="1"/>
<dbReference type="EMBL" id="CP000569">
    <property type="protein sequence ID" value="ABN73327.1"/>
    <property type="molecule type" value="Genomic_DNA"/>
</dbReference>
<dbReference type="RefSeq" id="WP_009875008.1">
    <property type="nucleotide sequence ID" value="NC_009053.1"/>
</dbReference>
<dbReference type="SMR" id="A3MYU1"/>
<dbReference type="STRING" id="416269.APL_0219"/>
<dbReference type="EnsemblBacteria" id="ABN73327">
    <property type="protein sequence ID" value="ABN73327"/>
    <property type="gene ID" value="APL_0219"/>
</dbReference>
<dbReference type="KEGG" id="apl:APL_0219"/>
<dbReference type="PATRIC" id="fig|416269.6.peg.224"/>
<dbReference type="eggNOG" id="COG0441">
    <property type="taxonomic scope" value="Bacteria"/>
</dbReference>
<dbReference type="HOGENOM" id="CLU_008554_0_1_6"/>
<dbReference type="Proteomes" id="UP000001432">
    <property type="component" value="Chromosome"/>
</dbReference>
<dbReference type="GO" id="GO:0005829">
    <property type="term" value="C:cytosol"/>
    <property type="evidence" value="ECO:0007669"/>
    <property type="project" value="TreeGrafter"/>
</dbReference>
<dbReference type="GO" id="GO:0005524">
    <property type="term" value="F:ATP binding"/>
    <property type="evidence" value="ECO:0007669"/>
    <property type="project" value="UniProtKB-UniRule"/>
</dbReference>
<dbReference type="GO" id="GO:0046872">
    <property type="term" value="F:metal ion binding"/>
    <property type="evidence" value="ECO:0007669"/>
    <property type="project" value="UniProtKB-KW"/>
</dbReference>
<dbReference type="GO" id="GO:0004829">
    <property type="term" value="F:threonine-tRNA ligase activity"/>
    <property type="evidence" value="ECO:0007669"/>
    <property type="project" value="UniProtKB-UniRule"/>
</dbReference>
<dbReference type="GO" id="GO:0000049">
    <property type="term" value="F:tRNA binding"/>
    <property type="evidence" value="ECO:0007669"/>
    <property type="project" value="UniProtKB-KW"/>
</dbReference>
<dbReference type="GO" id="GO:0006435">
    <property type="term" value="P:threonyl-tRNA aminoacylation"/>
    <property type="evidence" value="ECO:0007669"/>
    <property type="project" value="UniProtKB-UniRule"/>
</dbReference>
<dbReference type="CDD" id="cd01667">
    <property type="entry name" value="TGS_ThrRS"/>
    <property type="match status" value="1"/>
</dbReference>
<dbReference type="CDD" id="cd00860">
    <property type="entry name" value="ThrRS_anticodon"/>
    <property type="match status" value="1"/>
</dbReference>
<dbReference type="CDD" id="cd00771">
    <property type="entry name" value="ThrRS_core"/>
    <property type="match status" value="1"/>
</dbReference>
<dbReference type="FunFam" id="3.10.20.30:FF:000005">
    <property type="entry name" value="Threonine--tRNA ligase"/>
    <property type="match status" value="1"/>
</dbReference>
<dbReference type="FunFam" id="3.30.54.20:FF:000002">
    <property type="entry name" value="Threonine--tRNA ligase"/>
    <property type="match status" value="1"/>
</dbReference>
<dbReference type="FunFam" id="3.30.930.10:FF:000002">
    <property type="entry name" value="Threonine--tRNA ligase"/>
    <property type="match status" value="1"/>
</dbReference>
<dbReference type="FunFam" id="3.40.50.800:FF:000001">
    <property type="entry name" value="Threonine--tRNA ligase"/>
    <property type="match status" value="1"/>
</dbReference>
<dbReference type="FunFam" id="3.30.980.10:FF:000005">
    <property type="entry name" value="Threonyl-tRNA synthetase, mitochondrial"/>
    <property type="match status" value="1"/>
</dbReference>
<dbReference type="Gene3D" id="3.10.20.30">
    <property type="match status" value="1"/>
</dbReference>
<dbReference type="Gene3D" id="3.30.54.20">
    <property type="match status" value="1"/>
</dbReference>
<dbReference type="Gene3D" id="3.40.50.800">
    <property type="entry name" value="Anticodon-binding domain"/>
    <property type="match status" value="1"/>
</dbReference>
<dbReference type="Gene3D" id="3.30.930.10">
    <property type="entry name" value="Bira Bifunctional Protein, Domain 2"/>
    <property type="match status" value="1"/>
</dbReference>
<dbReference type="Gene3D" id="3.30.980.10">
    <property type="entry name" value="Threonyl-trna Synthetase, Chain A, domain 2"/>
    <property type="match status" value="1"/>
</dbReference>
<dbReference type="HAMAP" id="MF_00184">
    <property type="entry name" value="Thr_tRNA_synth"/>
    <property type="match status" value="1"/>
</dbReference>
<dbReference type="InterPro" id="IPR002314">
    <property type="entry name" value="aa-tRNA-synt_IIb"/>
</dbReference>
<dbReference type="InterPro" id="IPR006195">
    <property type="entry name" value="aa-tRNA-synth_II"/>
</dbReference>
<dbReference type="InterPro" id="IPR045864">
    <property type="entry name" value="aa-tRNA-synth_II/BPL/LPL"/>
</dbReference>
<dbReference type="InterPro" id="IPR004154">
    <property type="entry name" value="Anticodon-bd"/>
</dbReference>
<dbReference type="InterPro" id="IPR036621">
    <property type="entry name" value="Anticodon-bd_dom_sf"/>
</dbReference>
<dbReference type="InterPro" id="IPR012675">
    <property type="entry name" value="Beta-grasp_dom_sf"/>
</dbReference>
<dbReference type="InterPro" id="IPR004095">
    <property type="entry name" value="TGS"/>
</dbReference>
<dbReference type="InterPro" id="IPR012676">
    <property type="entry name" value="TGS-like"/>
</dbReference>
<dbReference type="InterPro" id="IPR002320">
    <property type="entry name" value="Thr-tRNA-ligase_IIa"/>
</dbReference>
<dbReference type="InterPro" id="IPR018163">
    <property type="entry name" value="Thr/Ala-tRNA-synth_IIc_edit"/>
</dbReference>
<dbReference type="InterPro" id="IPR047246">
    <property type="entry name" value="ThrRS_anticodon"/>
</dbReference>
<dbReference type="InterPro" id="IPR033728">
    <property type="entry name" value="ThrRS_core"/>
</dbReference>
<dbReference type="InterPro" id="IPR012947">
    <property type="entry name" value="tRNA_SAD"/>
</dbReference>
<dbReference type="NCBIfam" id="TIGR00418">
    <property type="entry name" value="thrS"/>
    <property type="match status" value="1"/>
</dbReference>
<dbReference type="PANTHER" id="PTHR11451:SF44">
    <property type="entry name" value="THREONINE--TRNA LIGASE, CHLOROPLASTIC_MITOCHONDRIAL 2"/>
    <property type="match status" value="1"/>
</dbReference>
<dbReference type="PANTHER" id="PTHR11451">
    <property type="entry name" value="THREONINE-TRNA LIGASE"/>
    <property type="match status" value="1"/>
</dbReference>
<dbReference type="Pfam" id="PF03129">
    <property type="entry name" value="HGTP_anticodon"/>
    <property type="match status" value="1"/>
</dbReference>
<dbReference type="Pfam" id="PF02824">
    <property type="entry name" value="TGS"/>
    <property type="match status" value="1"/>
</dbReference>
<dbReference type="Pfam" id="PF00587">
    <property type="entry name" value="tRNA-synt_2b"/>
    <property type="match status" value="1"/>
</dbReference>
<dbReference type="Pfam" id="PF07973">
    <property type="entry name" value="tRNA_SAD"/>
    <property type="match status" value="1"/>
</dbReference>
<dbReference type="PRINTS" id="PR01047">
    <property type="entry name" value="TRNASYNTHTHR"/>
</dbReference>
<dbReference type="SMART" id="SM00863">
    <property type="entry name" value="tRNA_SAD"/>
    <property type="match status" value="1"/>
</dbReference>
<dbReference type="SUPFAM" id="SSF52954">
    <property type="entry name" value="Class II aaRS ABD-related"/>
    <property type="match status" value="1"/>
</dbReference>
<dbReference type="SUPFAM" id="SSF55681">
    <property type="entry name" value="Class II aaRS and biotin synthetases"/>
    <property type="match status" value="1"/>
</dbReference>
<dbReference type="SUPFAM" id="SSF81271">
    <property type="entry name" value="TGS-like"/>
    <property type="match status" value="1"/>
</dbReference>
<dbReference type="SUPFAM" id="SSF55186">
    <property type="entry name" value="ThrRS/AlaRS common domain"/>
    <property type="match status" value="1"/>
</dbReference>
<dbReference type="PROSITE" id="PS50862">
    <property type="entry name" value="AA_TRNA_LIGASE_II"/>
    <property type="match status" value="1"/>
</dbReference>
<dbReference type="PROSITE" id="PS51880">
    <property type="entry name" value="TGS"/>
    <property type="match status" value="1"/>
</dbReference>